<reference key="1">
    <citation type="journal article" date="2006" name="J. Bacteriol.">
        <title>Chromosome rearrangement and diversification of Francisella tularensis revealed by the type B (OSU18) genome sequence.</title>
        <authorList>
            <person name="Petrosino J.F."/>
            <person name="Xiang Q."/>
            <person name="Karpathy S.E."/>
            <person name="Jiang H."/>
            <person name="Yerrapragada S."/>
            <person name="Liu Y."/>
            <person name="Gioia J."/>
            <person name="Hemphill L."/>
            <person name="Gonzalez A."/>
            <person name="Raghavan T.M."/>
            <person name="Uzman A."/>
            <person name="Fox G.E."/>
            <person name="Highlander S."/>
            <person name="Reichard M."/>
            <person name="Morton R.J."/>
            <person name="Clinkenbeard K.D."/>
            <person name="Weinstock G.M."/>
        </authorList>
    </citation>
    <scope>NUCLEOTIDE SEQUENCE [LARGE SCALE GENOMIC DNA]</scope>
    <source>
        <strain>OSU18</strain>
    </source>
</reference>
<feature type="chain" id="PRO_0000271626" description="ATP-dependent lipid A-core flippase">
    <location>
        <begin position="1"/>
        <end position="609"/>
    </location>
</feature>
<feature type="transmembrane region" description="Helical" evidence="1">
    <location>
        <begin position="47"/>
        <end position="67"/>
    </location>
</feature>
<feature type="transmembrane region" description="Helical" evidence="1">
    <location>
        <begin position="88"/>
        <end position="108"/>
    </location>
</feature>
<feature type="transmembrane region" description="Helical" evidence="1">
    <location>
        <begin position="167"/>
        <end position="187"/>
    </location>
</feature>
<feature type="transmembrane region" description="Helical" evidence="1">
    <location>
        <begin position="190"/>
        <end position="210"/>
    </location>
</feature>
<feature type="transmembrane region" description="Helical" evidence="1">
    <location>
        <begin position="279"/>
        <end position="299"/>
    </location>
</feature>
<feature type="transmembrane region" description="Helical" evidence="1">
    <location>
        <begin position="305"/>
        <end position="325"/>
    </location>
</feature>
<feature type="domain" description="ABC transmembrane type-1" evidence="1">
    <location>
        <begin position="47"/>
        <end position="340"/>
    </location>
</feature>
<feature type="domain" description="ABC transporter" evidence="1">
    <location>
        <begin position="372"/>
        <end position="606"/>
    </location>
</feature>
<feature type="binding site" evidence="1">
    <location>
        <begin position="404"/>
        <end position="411"/>
    </location>
    <ligand>
        <name>ATP</name>
        <dbReference type="ChEBI" id="CHEBI:30616"/>
    </ligand>
</feature>
<protein>
    <recommendedName>
        <fullName evidence="1">ATP-dependent lipid A-core flippase</fullName>
        <ecNumber evidence="1">7.5.2.6</ecNumber>
    </recommendedName>
    <alternativeName>
        <fullName evidence="1">Lipid A export ATP-binding/permease protein MsbA</fullName>
    </alternativeName>
</protein>
<name>MSBA_FRATO</name>
<gene>
    <name evidence="1" type="primary">msbA</name>
    <name type="synonym">valA</name>
    <name type="ordered locus">FTH_1609</name>
</gene>
<keyword id="KW-0067">ATP-binding</keyword>
<keyword id="KW-0997">Cell inner membrane</keyword>
<keyword id="KW-1003">Cell membrane</keyword>
<keyword id="KW-0445">Lipid transport</keyword>
<keyword id="KW-0472">Membrane</keyword>
<keyword id="KW-0547">Nucleotide-binding</keyword>
<keyword id="KW-1278">Translocase</keyword>
<keyword id="KW-0812">Transmembrane</keyword>
<keyword id="KW-1133">Transmembrane helix</keyword>
<keyword id="KW-0813">Transport</keyword>
<proteinExistence type="inferred from homology"/>
<organism>
    <name type="scientific">Francisella tularensis subsp. holarctica (strain OSU18)</name>
    <dbReference type="NCBI Taxonomy" id="393011"/>
    <lineage>
        <taxon>Bacteria</taxon>
        <taxon>Pseudomonadati</taxon>
        <taxon>Pseudomonadota</taxon>
        <taxon>Gammaproteobacteria</taxon>
        <taxon>Thiotrichales</taxon>
        <taxon>Francisellaceae</taxon>
        <taxon>Francisella</taxon>
    </lineage>
</organism>
<evidence type="ECO:0000255" key="1">
    <source>
        <dbReference type="HAMAP-Rule" id="MF_01703"/>
    </source>
</evidence>
<comment type="function">
    <text evidence="1">Involved in lipopolysaccharide (LPS) biosynthesis. Translocates lipid A-core from the inner to the outer leaflet of the inner membrane. Transmembrane domains (TMD) form a pore in the inner membrane and the ATP-binding domain (NBD) is responsible for energy generation.</text>
</comment>
<comment type="catalytic activity">
    <reaction evidence="1">
        <text>ATP + H2O + lipid A-core oligosaccharideSide 1 = ADP + phosphate + lipid A-core oligosaccharideSide 2.</text>
        <dbReference type="EC" id="7.5.2.6"/>
    </reaction>
</comment>
<comment type="subunit">
    <text evidence="1">Homodimer.</text>
</comment>
<comment type="subcellular location">
    <subcellularLocation>
        <location evidence="1">Cell inner membrane</location>
        <topology evidence="1">Multi-pass membrane protein</topology>
    </subcellularLocation>
</comment>
<comment type="domain">
    <text evidence="1">In MsbA the ATP-binding domain (NBD) and the transmembrane domain (TMD) are fused.</text>
</comment>
<comment type="similarity">
    <text evidence="1">Belongs to the ABC transporter superfamily. Lipid exporter (TC 3.A.1.106) family.</text>
</comment>
<accession>Q0BKJ3</accession>
<dbReference type="EC" id="7.5.2.6" evidence="1"/>
<dbReference type="EMBL" id="CP000437">
    <property type="protein sequence ID" value="ABI83391.1"/>
    <property type="molecule type" value="Genomic_DNA"/>
</dbReference>
<dbReference type="RefSeq" id="WP_003017108.1">
    <property type="nucleotide sequence ID" value="NC_017463.1"/>
</dbReference>
<dbReference type="SMR" id="Q0BKJ3"/>
<dbReference type="KEGG" id="fth:FTH_1609"/>
<dbReference type="GO" id="GO:0005886">
    <property type="term" value="C:plasma membrane"/>
    <property type="evidence" value="ECO:0007669"/>
    <property type="project" value="UniProtKB-SubCell"/>
</dbReference>
<dbReference type="GO" id="GO:0140359">
    <property type="term" value="F:ABC-type transporter activity"/>
    <property type="evidence" value="ECO:0007669"/>
    <property type="project" value="InterPro"/>
</dbReference>
<dbReference type="GO" id="GO:0005524">
    <property type="term" value="F:ATP binding"/>
    <property type="evidence" value="ECO:0007669"/>
    <property type="project" value="UniProtKB-KW"/>
</dbReference>
<dbReference type="GO" id="GO:0016887">
    <property type="term" value="F:ATP hydrolysis activity"/>
    <property type="evidence" value="ECO:0007669"/>
    <property type="project" value="InterPro"/>
</dbReference>
<dbReference type="GO" id="GO:0034040">
    <property type="term" value="F:ATPase-coupled lipid transmembrane transporter activity"/>
    <property type="evidence" value="ECO:0007669"/>
    <property type="project" value="InterPro"/>
</dbReference>
<dbReference type="CDD" id="cd18552">
    <property type="entry name" value="ABC_6TM_MsbA_like"/>
    <property type="match status" value="1"/>
</dbReference>
<dbReference type="FunFam" id="3.40.50.300:FF:000140">
    <property type="entry name" value="Lipid A export ATP-binding/permease protein MsbA"/>
    <property type="match status" value="1"/>
</dbReference>
<dbReference type="Gene3D" id="1.20.1560.10">
    <property type="entry name" value="ABC transporter type 1, transmembrane domain"/>
    <property type="match status" value="1"/>
</dbReference>
<dbReference type="Gene3D" id="3.40.50.300">
    <property type="entry name" value="P-loop containing nucleotide triphosphate hydrolases"/>
    <property type="match status" value="1"/>
</dbReference>
<dbReference type="InterPro" id="IPR003593">
    <property type="entry name" value="AAA+_ATPase"/>
</dbReference>
<dbReference type="InterPro" id="IPR011527">
    <property type="entry name" value="ABC1_TM_dom"/>
</dbReference>
<dbReference type="InterPro" id="IPR036640">
    <property type="entry name" value="ABC1_TM_sf"/>
</dbReference>
<dbReference type="InterPro" id="IPR003439">
    <property type="entry name" value="ABC_transporter-like_ATP-bd"/>
</dbReference>
<dbReference type="InterPro" id="IPR017871">
    <property type="entry name" value="ABC_transporter-like_CS"/>
</dbReference>
<dbReference type="InterPro" id="IPR011917">
    <property type="entry name" value="ABC_transpr_lipidA"/>
</dbReference>
<dbReference type="InterPro" id="IPR027417">
    <property type="entry name" value="P-loop_NTPase"/>
</dbReference>
<dbReference type="InterPro" id="IPR039421">
    <property type="entry name" value="Type_1_exporter"/>
</dbReference>
<dbReference type="NCBIfam" id="TIGR02203">
    <property type="entry name" value="MsbA_lipidA"/>
    <property type="match status" value="1"/>
</dbReference>
<dbReference type="PANTHER" id="PTHR24221">
    <property type="entry name" value="ATP-BINDING CASSETTE SUB-FAMILY B"/>
    <property type="match status" value="1"/>
</dbReference>
<dbReference type="PANTHER" id="PTHR24221:SF632">
    <property type="entry name" value="ATP-DEPENDENT LIPID A-CORE FLIPPASE"/>
    <property type="match status" value="1"/>
</dbReference>
<dbReference type="Pfam" id="PF00664">
    <property type="entry name" value="ABC_membrane"/>
    <property type="match status" value="1"/>
</dbReference>
<dbReference type="Pfam" id="PF00005">
    <property type="entry name" value="ABC_tran"/>
    <property type="match status" value="1"/>
</dbReference>
<dbReference type="SMART" id="SM00382">
    <property type="entry name" value="AAA"/>
    <property type="match status" value="1"/>
</dbReference>
<dbReference type="SUPFAM" id="SSF90123">
    <property type="entry name" value="ABC transporter transmembrane region"/>
    <property type="match status" value="1"/>
</dbReference>
<dbReference type="SUPFAM" id="SSF52540">
    <property type="entry name" value="P-loop containing nucleoside triphosphate hydrolases"/>
    <property type="match status" value="1"/>
</dbReference>
<dbReference type="PROSITE" id="PS50929">
    <property type="entry name" value="ABC_TM1F"/>
    <property type="match status" value="1"/>
</dbReference>
<dbReference type="PROSITE" id="PS00211">
    <property type="entry name" value="ABC_TRANSPORTER_1"/>
    <property type="match status" value="1"/>
</dbReference>
<dbReference type="PROSITE" id="PS50893">
    <property type="entry name" value="ABC_TRANSPORTER_2"/>
    <property type="match status" value="1"/>
</dbReference>
<dbReference type="PROSITE" id="PS51239">
    <property type="entry name" value="MSBA"/>
    <property type="match status" value="1"/>
</dbReference>
<sequence>MANMIDKIDLKSQGSSNLSGEMTNHQKVGTLYKRLLLQVKHLWHFLLLAAIGSIFFSAADASMIYLINPILNYGFGPGGGITKQSATILMLMGVGMVGLLALRSVGSFVSQYFIGSLGQKVVYKFRKDIYKRLMGLPASFFDKHSTGQIISRLLYNVDQVTEATSTAIITVVQDGTFVIGLIVVMFVSSWQLSLFLIVVGPFLGLFISIINKKFRNLSRNTQSSMGNVTHTAEETIRNYKEIRIFGAQQKQQNKFFKNLDYTYSQQIRTIALDALTSPVIQIIASLVLAFSLFTIAIFGTNEGDGSSWLTAGSFASFFAAAAAILKPIKNLTKVNVVIQKAVAATEDIFYILDYPAEKETGSKELAKVDGNVTIKDLSFAFGEHKVLSGVSVDIKAGQTVAFVGKSGSGKTTLTSIISRFYTQHEGEILLDGVDTRELTLENLRSHLSIVSQNVHLFDDTVYNNIAFGLSREVSEEEVIDALKRANAYEFVQELSDGINTNIGNNGSKLSGGQRQRISIARALLKNAPVLIFDEATSALDNESERVVQQALESLTKSCTTIVIAHRLSTVENADKIVVMDGGMVVESGKHQELLEQGGLYTRLYQSGLQ</sequence>